<proteinExistence type="inferred from homology"/>
<comment type="function">
    <text evidence="1">The glycine cleavage system catalyzes the degradation of glycine. The H protein shuttles the methylamine group of glycine from the P protein to the T protein.</text>
</comment>
<comment type="cofactor">
    <cofactor evidence="1">
        <name>(R)-lipoate</name>
        <dbReference type="ChEBI" id="CHEBI:83088"/>
    </cofactor>
    <text evidence="1">Binds 1 lipoyl cofactor covalently.</text>
</comment>
<comment type="subunit">
    <text evidence="1">The glycine cleavage system is composed of four proteins: P, T, L and H.</text>
</comment>
<comment type="similarity">
    <text evidence="1">Belongs to the GcvH family.</text>
</comment>
<gene>
    <name evidence="1" type="primary">gcvH</name>
    <name type="ordered locus">MCA0051</name>
</gene>
<evidence type="ECO:0000255" key="1">
    <source>
        <dbReference type="HAMAP-Rule" id="MF_00272"/>
    </source>
</evidence>
<evidence type="ECO:0000255" key="2">
    <source>
        <dbReference type="PROSITE-ProRule" id="PRU01066"/>
    </source>
</evidence>
<accession>Q60CU8</accession>
<feature type="chain" id="PRO_0000302389" description="Glycine cleavage system H protein">
    <location>
        <begin position="1"/>
        <end position="127"/>
    </location>
</feature>
<feature type="domain" description="Lipoyl-binding" evidence="2">
    <location>
        <begin position="24"/>
        <end position="105"/>
    </location>
</feature>
<feature type="modified residue" description="N6-lipoyllysine" evidence="1">
    <location>
        <position position="65"/>
    </location>
</feature>
<keyword id="KW-0450">Lipoyl</keyword>
<keyword id="KW-1185">Reference proteome</keyword>
<name>GCSH_METCA</name>
<protein>
    <recommendedName>
        <fullName evidence="1">Glycine cleavage system H protein</fullName>
    </recommendedName>
</protein>
<sequence>MSNLPAGLKYAKTHEWARLEADGTVKVGISDHAQEALGDLVYLELPAVGRRVHAGEACAVVESVKAAADVNSPLSGEIVARNEALADAPERVNQSPYEAWLFAVRPDDIGEMDQLLDAEGYRTIAEE</sequence>
<dbReference type="EMBL" id="AE017282">
    <property type="protein sequence ID" value="AAU90814.1"/>
    <property type="molecule type" value="Genomic_DNA"/>
</dbReference>
<dbReference type="RefSeq" id="WP_010959423.1">
    <property type="nucleotide sequence ID" value="NC_002977.6"/>
</dbReference>
<dbReference type="SMR" id="Q60CU8"/>
<dbReference type="STRING" id="243233.MCA0051"/>
<dbReference type="GeneID" id="88222401"/>
<dbReference type="KEGG" id="mca:MCA0051"/>
<dbReference type="eggNOG" id="COG0509">
    <property type="taxonomic scope" value="Bacteria"/>
</dbReference>
<dbReference type="HOGENOM" id="CLU_097408_2_1_6"/>
<dbReference type="Proteomes" id="UP000006821">
    <property type="component" value="Chromosome"/>
</dbReference>
<dbReference type="GO" id="GO:0005829">
    <property type="term" value="C:cytosol"/>
    <property type="evidence" value="ECO:0007669"/>
    <property type="project" value="TreeGrafter"/>
</dbReference>
<dbReference type="GO" id="GO:0005960">
    <property type="term" value="C:glycine cleavage complex"/>
    <property type="evidence" value="ECO:0007669"/>
    <property type="project" value="InterPro"/>
</dbReference>
<dbReference type="GO" id="GO:0019464">
    <property type="term" value="P:glycine decarboxylation via glycine cleavage system"/>
    <property type="evidence" value="ECO:0007669"/>
    <property type="project" value="UniProtKB-UniRule"/>
</dbReference>
<dbReference type="CDD" id="cd06848">
    <property type="entry name" value="GCS_H"/>
    <property type="match status" value="1"/>
</dbReference>
<dbReference type="Gene3D" id="2.40.50.100">
    <property type="match status" value="1"/>
</dbReference>
<dbReference type="HAMAP" id="MF_00272">
    <property type="entry name" value="GcvH"/>
    <property type="match status" value="1"/>
</dbReference>
<dbReference type="InterPro" id="IPR003016">
    <property type="entry name" value="2-oxoA_DH_lipoyl-BS"/>
</dbReference>
<dbReference type="InterPro" id="IPR000089">
    <property type="entry name" value="Biotin_lipoyl"/>
</dbReference>
<dbReference type="InterPro" id="IPR002930">
    <property type="entry name" value="GCV_H"/>
</dbReference>
<dbReference type="InterPro" id="IPR033753">
    <property type="entry name" value="GCV_H/Fam206"/>
</dbReference>
<dbReference type="InterPro" id="IPR017453">
    <property type="entry name" value="GCV_H_sub"/>
</dbReference>
<dbReference type="InterPro" id="IPR011053">
    <property type="entry name" value="Single_hybrid_motif"/>
</dbReference>
<dbReference type="NCBIfam" id="TIGR00527">
    <property type="entry name" value="gcvH"/>
    <property type="match status" value="1"/>
</dbReference>
<dbReference type="NCBIfam" id="NF002270">
    <property type="entry name" value="PRK01202.1"/>
    <property type="match status" value="1"/>
</dbReference>
<dbReference type="PANTHER" id="PTHR11715">
    <property type="entry name" value="GLYCINE CLEAVAGE SYSTEM H PROTEIN"/>
    <property type="match status" value="1"/>
</dbReference>
<dbReference type="PANTHER" id="PTHR11715:SF3">
    <property type="entry name" value="GLYCINE CLEAVAGE SYSTEM H PROTEIN-RELATED"/>
    <property type="match status" value="1"/>
</dbReference>
<dbReference type="Pfam" id="PF01597">
    <property type="entry name" value="GCV_H"/>
    <property type="match status" value="1"/>
</dbReference>
<dbReference type="SUPFAM" id="SSF51230">
    <property type="entry name" value="Single hybrid motif"/>
    <property type="match status" value="1"/>
</dbReference>
<dbReference type="PROSITE" id="PS50968">
    <property type="entry name" value="BIOTINYL_LIPOYL"/>
    <property type="match status" value="1"/>
</dbReference>
<dbReference type="PROSITE" id="PS00189">
    <property type="entry name" value="LIPOYL"/>
    <property type="match status" value="1"/>
</dbReference>
<reference key="1">
    <citation type="journal article" date="2004" name="PLoS Biol.">
        <title>Genomic insights into methanotrophy: the complete genome sequence of Methylococcus capsulatus (Bath).</title>
        <authorList>
            <person name="Ward N.L."/>
            <person name="Larsen O."/>
            <person name="Sakwa J."/>
            <person name="Bruseth L."/>
            <person name="Khouri H.M."/>
            <person name="Durkin A.S."/>
            <person name="Dimitrov G."/>
            <person name="Jiang L."/>
            <person name="Scanlan D."/>
            <person name="Kang K.H."/>
            <person name="Lewis M.R."/>
            <person name="Nelson K.E."/>
            <person name="Methe B.A."/>
            <person name="Wu M."/>
            <person name="Heidelberg J.F."/>
            <person name="Paulsen I.T."/>
            <person name="Fouts D.E."/>
            <person name="Ravel J."/>
            <person name="Tettelin H."/>
            <person name="Ren Q."/>
            <person name="Read T.D."/>
            <person name="DeBoy R.T."/>
            <person name="Seshadri R."/>
            <person name="Salzberg S.L."/>
            <person name="Jensen H.B."/>
            <person name="Birkeland N.K."/>
            <person name="Nelson W.C."/>
            <person name="Dodson R.J."/>
            <person name="Grindhaug S.H."/>
            <person name="Holt I.E."/>
            <person name="Eidhammer I."/>
            <person name="Jonasen I."/>
            <person name="Vanaken S."/>
            <person name="Utterback T.R."/>
            <person name="Feldblyum T.V."/>
            <person name="Fraser C.M."/>
            <person name="Lillehaug J.R."/>
            <person name="Eisen J.A."/>
        </authorList>
    </citation>
    <scope>NUCLEOTIDE SEQUENCE [LARGE SCALE GENOMIC DNA]</scope>
    <source>
        <strain>ATCC 33009 / NCIMB 11132 / Bath</strain>
    </source>
</reference>
<organism>
    <name type="scientific">Methylococcus capsulatus (strain ATCC 33009 / NCIMB 11132 / Bath)</name>
    <dbReference type="NCBI Taxonomy" id="243233"/>
    <lineage>
        <taxon>Bacteria</taxon>
        <taxon>Pseudomonadati</taxon>
        <taxon>Pseudomonadota</taxon>
        <taxon>Gammaproteobacteria</taxon>
        <taxon>Methylococcales</taxon>
        <taxon>Methylococcaceae</taxon>
        <taxon>Methylococcus</taxon>
    </lineage>
</organism>